<proteinExistence type="inferred from homology"/>
<evidence type="ECO:0000255" key="1">
    <source>
        <dbReference type="HAMAP-Rule" id="MF_00050"/>
    </source>
</evidence>
<protein>
    <recommendedName>
        <fullName evidence="1">Elongation factor Ts</fullName>
        <shortName evidence="1">EF-Ts</shortName>
    </recommendedName>
</protein>
<sequence>MSISASLVKELRDLTGAGMMDCKAALAATEGKIEAAVDWLRAKGIAKADKKAGRTAAEGLVGVAASGNKAVVVEVNSETDFVARNDAFQELVRKIAQAALSTDGSSEAVANANVDGKTVTEAAKDAVATIGENISFRRSAALSVPQGVVATYIHNGVADGLGKLGVLVAIETAGDAEAAQAFGRQVAMHVAAVNPLALTSADVNPEAAEREKAIFIDQARQSGKPDNIIEKMVEGRMRKFYEEVVLLSQAFVINPDLTVEAALKDAEKAIGAPAKITGFARIALGEGIEKEESDFAAEVAAAAKG</sequence>
<feature type="chain" id="PRO_0000161091" description="Elongation factor Ts">
    <location>
        <begin position="1"/>
        <end position="305"/>
    </location>
</feature>
<feature type="region of interest" description="Involved in Mg(2+) ion dislocation from EF-Tu" evidence="1">
    <location>
        <begin position="79"/>
        <end position="82"/>
    </location>
</feature>
<reference key="1">
    <citation type="journal article" date="2002" name="Proc. Natl. Acad. Sci. U.S.A.">
        <title>The Brucella suis genome reveals fundamental similarities between animal and plant pathogens and symbionts.</title>
        <authorList>
            <person name="Paulsen I.T."/>
            <person name="Seshadri R."/>
            <person name="Nelson K.E."/>
            <person name="Eisen J.A."/>
            <person name="Heidelberg J.F."/>
            <person name="Read T.D."/>
            <person name="Dodson R.J."/>
            <person name="Umayam L.A."/>
            <person name="Brinkac L.M."/>
            <person name="Beanan M.J."/>
            <person name="Daugherty S.C."/>
            <person name="DeBoy R.T."/>
            <person name="Durkin A.S."/>
            <person name="Kolonay J.F."/>
            <person name="Madupu R."/>
            <person name="Nelson W.C."/>
            <person name="Ayodeji B."/>
            <person name="Kraul M."/>
            <person name="Shetty J."/>
            <person name="Malek J.A."/>
            <person name="Van Aken S.E."/>
            <person name="Riedmuller S."/>
            <person name="Tettelin H."/>
            <person name="Gill S.R."/>
            <person name="White O."/>
            <person name="Salzberg S.L."/>
            <person name="Hoover D.L."/>
            <person name="Lindler L.E."/>
            <person name="Halling S.M."/>
            <person name="Boyle S.M."/>
            <person name="Fraser C.M."/>
        </authorList>
    </citation>
    <scope>NUCLEOTIDE SEQUENCE [LARGE SCALE GENOMIC DNA]</scope>
    <source>
        <strain>1330</strain>
    </source>
</reference>
<reference key="2">
    <citation type="journal article" date="2011" name="J. Bacteriol.">
        <title>Revised genome sequence of Brucella suis 1330.</title>
        <authorList>
            <person name="Tae H."/>
            <person name="Shallom S."/>
            <person name="Settlage R."/>
            <person name="Preston D."/>
            <person name="Adams L.G."/>
            <person name="Garner H.R."/>
        </authorList>
    </citation>
    <scope>NUCLEOTIDE SEQUENCE [LARGE SCALE GENOMIC DNA]</scope>
    <source>
        <strain>1330</strain>
    </source>
</reference>
<comment type="function">
    <text evidence="1">Associates with the EF-Tu.GDP complex and induces the exchange of GDP to GTP. It remains bound to the aminoacyl-tRNA.EF-Tu.GTP complex up to the GTP hydrolysis stage on the ribosome.</text>
</comment>
<comment type="subcellular location">
    <subcellularLocation>
        <location evidence="1">Cytoplasm</location>
    </subcellularLocation>
</comment>
<comment type="similarity">
    <text evidence="1">Belongs to the EF-Ts family.</text>
</comment>
<keyword id="KW-0963">Cytoplasm</keyword>
<keyword id="KW-0251">Elongation factor</keyword>
<keyword id="KW-0648">Protein biosynthesis</keyword>
<accession>P64049</accession>
<accession>G0KA83</accession>
<accession>Q8YHH5</accession>
<gene>
    <name evidence="1" type="primary">tsf</name>
    <name type="ordered locus">BR1161</name>
    <name type="ordered locus">BS1330_I1157</name>
</gene>
<name>EFTS_BRUSU</name>
<organism>
    <name type="scientific">Brucella suis biovar 1 (strain 1330)</name>
    <dbReference type="NCBI Taxonomy" id="204722"/>
    <lineage>
        <taxon>Bacteria</taxon>
        <taxon>Pseudomonadati</taxon>
        <taxon>Pseudomonadota</taxon>
        <taxon>Alphaproteobacteria</taxon>
        <taxon>Hyphomicrobiales</taxon>
        <taxon>Brucellaceae</taxon>
        <taxon>Brucella/Ochrobactrum group</taxon>
        <taxon>Brucella</taxon>
    </lineage>
</organism>
<dbReference type="EMBL" id="AE014291">
    <property type="protein sequence ID" value="AAN30081.1"/>
    <property type="molecule type" value="Genomic_DNA"/>
</dbReference>
<dbReference type="EMBL" id="CP002997">
    <property type="protein sequence ID" value="AEM18499.1"/>
    <property type="molecule type" value="Genomic_DNA"/>
</dbReference>
<dbReference type="RefSeq" id="WP_002964288.1">
    <property type="nucleotide sequence ID" value="NZ_KN046804.1"/>
</dbReference>
<dbReference type="SMR" id="P64049"/>
<dbReference type="GeneID" id="93016505"/>
<dbReference type="KEGG" id="bms:BR1161"/>
<dbReference type="KEGG" id="bsi:BS1330_I1157"/>
<dbReference type="PATRIC" id="fig|204722.21.peg.1955"/>
<dbReference type="HOGENOM" id="CLU_047155_2_0_5"/>
<dbReference type="PhylomeDB" id="P64049"/>
<dbReference type="Proteomes" id="UP000007104">
    <property type="component" value="Chromosome I"/>
</dbReference>
<dbReference type="GO" id="GO:0005737">
    <property type="term" value="C:cytoplasm"/>
    <property type="evidence" value="ECO:0007669"/>
    <property type="project" value="UniProtKB-SubCell"/>
</dbReference>
<dbReference type="GO" id="GO:0003746">
    <property type="term" value="F:translation elongation factor activity"/>
    <property type="evidence" value="ECO:0007669"/>
    <property type="project" value="UniProtKB-UniRule"/>
</dbReference>
<dbReference type="CDD" id="cd14275">
    <property type="entry name" value="UBA_EF-Ts"/>
    <property type="match status" value="1"/>
</dbReference>
<dbReference type="FunFam" id="1.10.286.20:FF:000001">
    <property type="entry name" value="Elongation factor Ts"/>
    <property type="match status" value="1"/>
</dbReference>
<dbReference type="FunFam" id="1.10.8.10:FF:000001">
    <property type="entry name" value="Elongation factor Ts"/>
    <property type="match status" value="1"/>
</dbReference>
<dbReference type="Gene3D" id="1.10.286.20">
    <property type="match status" value="1"/>
</dbReference>
<dbReference type="Gene3D" id="1.10.8.10">
    <property type="entry name" value="DNA helicase RuvA subunit, C-terminal domain"/>
    <property type="match status" value="1"/>
</dbReference>
<dbReference type="Gene3D" id="3.30.479.20">
    <property type="entry name" value="Elongation factor Ts, dimerisation domain"/>
    <property type="match status" value="2"/>
</dbReference>
<dbReference type="HAMAP" id="MF_00050">
    <property type="entry name" value="EF_Ts"/>
    <property type="match status" value="1"/>
</dbReference>
<dbReference type="InterPro" id="IPR036402">
    <property type="entry name" value="EF-Ts_dimer_sf"/>
</dbReference>
<dbReference type="InterPro" id="IPR001816">
    <property type="entry name" value="Transl_elong_EFTs/EF1B"/>
</dbReference>
<dbReference type="InterPro" id="IPR014039">
    <property type="entry name" value="Transl_elong_EFTs/EF1B_dimer"/>
</dbReference>
<dbReference type="InterPro" id="IPR018101">
    <property type="entry name" value="Transl_elong_Ts_CS"/>
</dbReference>
<dbReference type="InterPro" id="IPR009060">
    <property type="entry name" value="UBA-like_sf"/>
</dbReference>
<dbReference type="NCBIfam" id="TIGR00116">
    <property type="entry name" value="tsf"/>
    <property type="match status" value="1"/>
</dbReference>
<dbReference type="PANTHER" id="PTHR11741">
    <property type="entry name" value="ELONGATION FACTOR TS"/>
    <property type="match status" value="1"/>
</dbReference>
<dbReference type="PANTHER" id="PTHR11741:SF0">
    <property type="entry name" value="ELONGATION FACTOR TS, MITOCHONDRIAL"/>
    <property type="match status" value="1"/>
</dbReference>
<dbReference type="Pfam" id="PF00889">
    <property type="entry name" value="EF_TS"/>
    <property type="match status" value="1"/>
</dbReference>
<dbReference type="SUPFAM" id="SSF54713">
    <property type="entry name" value="Elongation factor Ts (EF-Ts), dimerisation domain"/>
    <property type="match status" value="2"/>
</dbReference>
<dbReference type="SUPFAM" id="SSF46934">
    <property type="entry name" value="UBA-like"/>
    <property type="match status" value="1"/>
</dbReference>
<dbReference type="PROSITE" id="PS01127">
    <property type="entry name" value="EF_TS_2"/>
    <property type="match status" value="1"/>
</dbReference>